<proteinExistence type="inferred from homology"/>
<organism>
    <name type="scientific">Parvibaculum lavamentivorans (strain DS-1 / DSM 13023 / NCIMB 13966)</name>
    <dbReference type="NCBI Taxonomy" id="402881"/>
    <lineage>
        <taxon>Bacteria</taxon>
        <taxon>Pseudomonadati</taxon>
        <taxon>Pseudomonadota</taxon>
        <taxon>Alphaproteobacteria</taxon>
        <taxon>Hyphomicrobiales</taxon>
        <taxon>Parvibaculaceae</taxon>
        <taxon>Parvibaculum</taxon>
    </lineage>
</organism>
<gene>
    <name evidence="1" type="primary">rplY</name>
    <name evidence="1" type="synonym">ctc</name>
    <name type="ordered locus">Plav_2257</name>
</gene>
<feature type="chain" id="PRO_1000073298" description="Large ribosomal subunit protein bL25">
    <location>
        <begin position="1"/>
        <end position="216"/>
    </location>
</feature>
<feature type="region of interest" description="Disordered" evidence="2">
    <location>
        <begin position="1"/>
        <end position="21"/>
    </location>
</feature>
<feature type="region of interest" description="Disordered" evidence="2">
    <location>
        <begin position="192"/>
        <end position="216"/>
    </location>
</feature>
<feature type="compositionally biased region" description="Basic and acidic residues" evidence="2">
    <location>
        <begin position="195"/>
        <end position="216"/>
    </location>
</feature>
<protein>
    <recommendedName>
        <fullName evidence="1">Large ribosomal subunit protein bL25</fullName>
    </recommendedName>
    <alternativeName>
        <fullName evidence="3">50S ribosomal protein L25</fullName>
    </alternativeName>
    <alternativeName>
        <fullName evidence="1">General stress protein CTC</fullName>
    </alternativeName>
</protein>
<dbReference type="EMBL" id="CP000774">
    <property type="protein sequence ID" value="ABS63871.1"/>
    <property type="molecule type" value="Genomic_DNA"/>
</dbReference>
<dbReference type="RefSeq" id="WP_012111177.1">
    <property type="nucleotide sequence ID" value="NC_009719.1"/>
</dbReference>
<dbReference type="SMR" id="A7HVD8"/>
<dbReference type="STRING" id="402881.Plav_2257"/>
<dbReference type="KEGG" id="pla:Plav_2257"/>
<dbReference type="eggNOG" id="COG1825">
    <property type="taxonomic scope" value="Bacteria"/>
</dbReference>
<dbReference type="HOGENOM" id="CLU_075939_0_0_5"/>
<dbReference type="OrthoDB" id="9806411at2"/>
<dbReference type="Proteomes" id="UP000006377">
    <property type="component" value="Chromosome"/>
</dbReference>
<dbReference type="GO" id="GO:0022625">
    <property type="term" value="C:cytosolic large ribosomal subunit"/>
    <property type="evidence" value="ECO:0007669"/>
    <property type="project" value="TreeGrafter"/>
</dbReference>
<dbReference type="GO" id="GO:0008097">
    <property type="term" value="F:5S rRNA binding"/>
    <property type="evidence" value="ECO:0007669"/>
    <property type="project" value="InterPro"/>
</dbReference>
<dbReference type="GO" id="GO:0003735">
    <property type="term" value="F:structural constituent of ribosome"/>
    <property type="evidence" value="ECO:0007669"/>
    <property type="project" value="InterPro"/>
</dbReference>
<dbReference type="GO" id="GO:0006412">
    <property type="term" value="P:translation"/>
    <property type="evidence" value="ECO:0007669"/>
    <property type="project" value="UniProtKB-UniRule"/>
</dbReference>
<dbReference type="CDD" id="cd00495">
    <property type="entry name" value="Ribosomal_L25_TL5_CTC"/>
    <property type="match status" value="1"/>
</dbReference>
<dbReference type="Gene3D" id="2.170.120.20">
    <property type="entry name" value="Ribosomal protein L25, beta domain"/>
    <property type="match status" value="1"/>
</dbReference>
<dbReference type="Gene3D" id="2.40.240.10">
    <property type="entry name" value="Ribosomal Protein L25, Chain P"/>
    <property type="match status" value="1"/>
</dbReference>
<dbReference type="HAMAP" id="MF_01334">
    <property type="entry name" value="Ribosomal_bL25_CTC"/>
    <property type="match status" value="1"/>
</dbReference>
<dbReference type="InterPro" id="IPR020056">
    <property type="entry name" value="Rbsml_bL25/Gln-tRNA_synth_N"/>
</dbReference>
<dbReference type="InterPro" id="IPR011035">
    <property type="entry name" value="Ribosomal_bL25/Gln-tRNA_synth"/>
</dbReference>
<dbReference type="InterPro" id="IPR020057">
    <property type="entry name" value="Ribosomal_bL25_b-dom"/>
</dbReference>
<dbReference type="InterPro" id="IPR037121">
    <property type="entry name" value="Ribosomal_bL25_C"/>
</dbReference>
<dbReference type="InterPro" id="IPR001021">
    <property type="entry name" value="Ribosomal_bL25_long"/>
</dbReference>
<dbReference type="InterPro" id="IPR029751">
    <property type="entry name" value="Ribosomal_L25_dom"/>
</dbReference>
<dbReference type="InterPro" id="IPR020930">
    <property type="entry name" value="Ribosomal_uL5_bac-type"/>
</dbReference>
<dbReference type="NCBIfam" id="TIGR00731">
    <property type="entry name" value="bL25_bact_ctc"/>
    <property type="match status" value="1"/>
</dbReference>
<dbReference type="NCBIfam" id="NF004128">
    <property type="entry name" value="PRK05618.1-2"/>
    <property type="match status" value="1"/>
</dbReference>
<dbReference type="NCBIfam" id="NF004612">
    <property type="entry name" value="PRK05943.1"/>
    <property type="match status" value="1"/>
</dbReference>
<dbReference type="PANTHER" id="PTHR33284">
    <property type="entry name" value="RIBOSOMAL PROTEIN L25/GLN-TRNA SYNTHETASE, ANTI-CODON-BINDING DOMAIN-CONTAINING PROTEIN"/>
    <property type="match status" value="1"/>
</dbReference>
<dbReference type="PANTHER" id="PTHR33284:SF1">
    <property type="entry name" value="RIBOSOMAL PROTEIN L25_GLN-TRNA SYNTHETASE, ANTI-CODON-BINDING DOMAIN-CONTAINING PROTEIN"/>
    <property type="match status" value="1"/>
</dbReference>
<dbReference type="Pfam" id="PF01386">
    <property type="entry name" value="Ribosomal_L25p"/>
    <property type="match status" value="1"/>
</dbReference>
<dbReference type="Pfam" id="PF14693">
    <property type="entry name" value="Ribosomal_TL5_C"/>
    <property type="match status" value="1"/>
</dbReference>
<dbReference type="SUPFAM" id="SSF50715">
    <property type="entry name" value="Ribosomal protein L25-like"/>
    <property type="match status" value="1"/>
</dbReference>
<keyword id="KW-1185">Reference proteome</keyword>
<keyword id="KW-0687">Ribonucleoprotein</keyword>
<keyword id="KW-0689">Ribosomal protein</keyword>
<keyword id="KW-0694">RNA-binding</keyword>
<keyword id="KW-0699">rRNA-binding</keyword>
<accession>A7HVD8</accession>
<evidence type="ECO:0000255" key="1">
    <source>
        <dbReference type="HAMAP-Rule" id="MF_01334"/>
    </source>
</evidence>
<evidence type="ECO:0000256" key="2">
    <source>
        <dbReference type="SAM" id="MobiDB-lite"/>
    </source>
</evidence>
<evidence type="ECO:0000305" key="3"/>
<sequence>MAETQTLKAEAREKGSKGAVRSLRRAGRVPAVIYGDKQSPELIAVSYKDVSALYQTGTFMSHVLDVEIGGKTERVIPRDVQFEPVRDFIIHVDFLRLGKNATVTVDVPVHFHNHEASPGIKAGGVLNIVRHEVELVCPADAIPEQLDIDLTGFEMGSSIHISAVKLPAKVSPTITDRDFTIATIAAPAAVVSADNEAKTEEAGEDKSEEKSSGKED</sequence>
<comment type="function">
    <text evidence="1">This is one of the proteins that binds to the 5S RNA in the ribosome where it forms part of the central protuberance.</text>
</comment>
<comment type="subunit">
    <text evidence="1">Part of the 50S ribosomal subunit; part of the 5S rRNA/L5/L18/L25 subcomplex. Contacts the 5S rRNA. Binds to the 5S rRNA independently of L5 and L18.</text>
</comment>
<comment type="similarity">
    <text evidence="1">Belongs to the bacterial ribosomal protein bL25 family. CTC subfamily.</text>
</comment>
<reference key="1">
    <citation type="journal article" date="2011" name="Stand. Genomic Sci.">
        <title>Complete genome sequence of Parvibaculum lavamentivorans type strain (DS-1(T)).</title>
        <authorList>
            <person name="Schleheck D."/>
            <person name="Weiss M."/>
            <person name="Pitluck S."/>
            <person name="Bruce D."/>
            <person name="Land M.L."/>
            <person name="Han S."/>
            <person name="Saunders E."/>
            <person name="Tapia R."/>
            <person name="Detter C."/>
            <person name="Brettin T."/>
            <person name="Han J."/>
            <person name="Woyke T."/>
            <person name="Goodwin L."/>
            <person name="Pennacchio L."/>
            <person name="Nolan M."/>
            <person name="Cook A.M."/>
            <person name="Kjelleberg S."/>
            <person name="Thomas T."/>
        </authorList>
    </citation>
    <scope>NUCLEOTIDE SEQUENCE [LARGE SCALE GENOMIC DNA]</scope>
    <source>
        <strain>DS-1 / DSM 13023 / NCIMB 13966</strain>
    </source>
</reference>
<name>RL25_PARL1</name>